<name>KUP_FLAJ1</name>
<reference key="1">
    <citation type="journal article" date="2009" name="Appl. Environ. Microbiol.">
        <title>Novel features of the polysaccharide-digesting gliding bacterium Flavobacterium johnsoniae as revealed by genome sequence analysis.</title>
        <authorList>
            <person name="McBride M.J."/>
            <person name="Xie G."/>
            <person name="Martens E.C."/>
            <person name="Lapidus A."/>
            <person name="Henrissat B."/>
            <person name="Rhodes R.G."/>
            <person name="Goltsman E."/>
            <person name="Wang W."/>
            <person name="Xu J."/>
            <person name="Hunnicutt D.W."/>
            <person name="Staroscik A.M."/>
            <person name="Hoover T.R."/>
            <person name="Cheng Y.Q."/>
            <person name="Stein J.L."/>
        </authorList>
    </citation>
    <scope>NUCLEOTIDE SEQUENCE [LARGE SCALE GENOMIC DNA]</scope>
    <source>
        <strain>ATCC 17061 / DSM 2064 / JCM 8514 / BCRC 14874 / CCUG 350202 / NBRC 14942 / NCIMB 11054 / UW101</strain>
    </source>
</reference>
<gene>
    <name evidence="1" type="primary">kup</name>
    <name type="ordered locus">Fjoh_4780</name>
</gene>
<protein>
    <recommendedName>
        <fullName evidence="1">Probable potassium transport system protein Kup</fullName>
    </recommendedName>
</protein>
<sequence>MSASHKNLHSKLSIGGLLITLGIIYGDIGTSPLYVMKAILGNHTINADIVLGGISCVFWTLTLQTTIKYVLITLSADNHGEGGIFALYALVKKTKIQWLIVPAIIGGSALLADGIITPPISISSAVEGIRAFYPTMQTQTIVYIVITILFILFTIQQFGTKLVGKFFAPMMLIWFAMLGTLGFIQIMHFPEVIKAINPYYAYHLLSVHPDGFFVLGFVFLCTTGAEALYSDMGHCGRKNIRISWIFVKTTLVLNYFGQAAYLIHHEGSTLQQLGGENGNPFYLIMPHWFLPFGIVVATLAAVIASQALISGSFTLINEAMRLNFWPKVKIKYPTEVKGQLYIPSINWLLFFGCVGIVLHFEKSGNMEHAYGLAIILCMIMTTILLNYYLIMKRVKLYFMVPLITIYLLIEFSFLIANITKFAEGGYVTLIIAILLISIMTIWYLAKKINKNYTKVIKIDDYKKVLMELSEDLSIPKYATHLVYMTNANSVDELEEKVIYSILQKRPKRADIYWFVHVNILTEPYKTQYKVTEIAKDDIYRIDFNLGFREPTKINLMFREVIRDMVKRGEVDITSRYESLNKNNIIGDFKFVLSEKFLSNDNDLRWHENIIMNSYFFIKKLSLSEERAFGLDSSSVKIEKFPMVLHAPENIGLTRITK</sequence>
<proteinExistence type="inferred from homology"/>
<accession>A5FAI5</accession>
<organism>
    <name type="scientific">Flavobacterium johnsoniae (strain ATCC 17061 / DSM 2064 / JCM 8514 / BCRC 14874 / CCUG 350202 / NBRC 14942 / NCIMB 11054 / UW101)</name>
    <name type="common">Cytophaga johnsonae</name>
    <dbReference type="NCBI Taxonomy" id="376686"/>
    <lineage>
        <taxon>Bacteria</taxon>
        <taxon>Pseudomonadati</taxon>
        <taxon>Bacteroidota</taxon>
        <taxon>Flavobacteriia</taxon>
        <taxon>Flavobacteriales</taxon>
        <taxon>Flavobacteriaceae</taxon>
        <taxon>Flavobacterium</taxon>
    </lineage>
</organism>
<dbReference type="EMBL" id="CP000685">
    <property type="protein sequence ID" value="ABQ07779.1"/>
    <property type="molecule type" value="Genomic_DNA"/>
</dbReference>
<dbReference type="RefSeq" id="WP_012026745.1">
    <property type="nucleotide sequence ID" value="NC_009441.1"/>
</dbReference>
<dbReference type="STRING" id="376686.Fjoh_4780"/>
<dbReference type="KEGG" id="fjo:Fjoh_4780"/>
<dbReference type="eggNOG" id="COG3158">
    <property type="taxonomic scope" value="Bacteria"/>
</dbReference>
<dbReference type="HOGENOM" id="CLU_008142_4_1_10"/>
<dbReference type="OrthoDB" id="9805577at2"/>
<dbReference type="Proteomes" id="UP000006694">
    <property type="component" value="Chromosome"/>
</dbReference>
<dbReference type="GO" id="GO:0005886">
    <property type="term" value="C:plasma membrane"/>
    <property type="evidence" value="ECO:0007669"/>
    <property type="project" value="UniProtKB-SubCell"/>
</dbReference>
<dbReference type="GO" id="GO:0015079">
    <property type="term" value="F:potassium ion transmembrane transporter activity"/>
    <property type="evidence" value="ECO:0007669"/>
    <property type="project" value="UniProtKB-UniRule"/>
</dbReference>
<dbReference type="GO" id="GO:0015293">
    <property type="term" value="F:symporter activity"/>
    <property type="evidence" value="ECO:0007669"/>
    <property type="project" value="UniProtKB-UniRule"/>
</dbReference>
<dbReference type="HAMAP" id="MF_01522">
    <property type="entry name" value="Kup"/>
    <property type="match status" value="1"/>
</dbReference>
<dbReference type="InterPro" id="IPR003855">
    <property type="entry name" value="K+_transporter"/>
</dbReference>
<dbReference type="InterPro" id="IPR053952">
    <property type="entry name" value="K_trans_C"/>
</dbReference>
<dbReference type="InterPro" id="IPR053951">
    <property type="entry name" value="K_trans_N"/>
</dbReference>
<dbReference type="InterPro" id="IPR023051">
    <property type="entry name" value="Kup"/>
</dbReference>
<dbReference type="PANTHER" id="PTHR30540:SF83">
    <property type="entry name" value="K+ POTASSIUM TRANSPORTER"/>
    <property type="match status" value="1"/>
</dbReference>
<dbReference type="PANTHER" id="PTHR30540">
    <property type="entry name" value="OSMOTIC STRESS POTASSIUM TRANSPORTER"/>
    <property type="match status" value="1"/>
</dbReference>
<dbReference type="Pfam" id="PF02705">
    <property type="entry name" value="K_trans"/>
    <property type="match status" value="1"/>
</dbReference>
<dbReference type="Pfam" id="PF22776">
    <property type="entry name" value="K_trans_C"/>
    <property type="match status" value="1"/>
</dbReference>
<evidence type="ECO:0000255" key="1">
    <source>
        <dbReference type="HAMAP-Rule" id="MF_01522"/>
    </source>
</evidence>
<comment type="function">
    <text evidence="1">Transport of potassium into the cell. Likely operates as a K(+):H(+) symporter.</text>
</comment>
<comment type="catalytic activity">
    <reaction evidence="1">
        <text>K(+)(in) + H(+)(in) = K(+)(out) + H(+)(out)</text>
        <dbReference type="Rhea" id="RHEA:28490"/>
        <dbReference type="ChEBI" id="CHEBI:15378"/>
        <dbReference type="ChEBI" id="CHEBI:29103"/>
    </reaction>
    <physiologicalReaction direction="right-to-left" evidence="1">
        <dbReference type="Rhea" id="RHEA:28492"/>
    </physiologicalReaction>
</comment>
<comment type="subcellular location">
    <subcellularLocation>
        <location evidence="1">Cell inner membrane</location>
        <topology evidence="1">Multi-pass membrane protein</topology>
    </subcellularLocation>
</comment>
<comment type="similarity">
    <text evidence="1">Belongs to the HAK/KUP transporter (TC 2.A.72) family.</text>
</comment>
<keyword id="KW-0997">Cell inner membrane</keyword>
<keyword id="KW-1003">Cell membrane</keyword>
<keyword id="KW-0406">Ion transport</keyword>
<keyword id="KW-0472">Membrane</keyword>
<keyword id="KW-0630">Potassium</keyword>
<keyword id="KW-0633">Potassium transport</keyword>
<keyword id="KW-0769">Symport</keyword>
<keyword id="KW-0812">Transmembrane</keyword>
<keyword id="KW-1133">Transmembrane helix</keyword>
<keyword id="KW-0813">Transport</keyword>
<feature type="chain" id="PRO_0000333307" description="Probable potassium transport system protein Kup">
    <location>
        <begin position="1"/>
        <end position="657"/>
    </location>
</feature>
<feature type="transmembrane region" description="Helical" evidence="1">
    <location>
        <begin position="14"/>
        <end position="34"/>
    </location>
</feature>
<feature type="transmembrane region" description="Helical" evidence="1">
    <location>
        <begin position="47"/>
        <end position="67"/>
    </location>
</feature>
<feature type="transmembrane region" description="Helical" evidence="1">
    <location>
        <begin position="96"/>
        <end position="116"/>
    </location>
</feature>
<feature type="transmembrane region" description="Helical" evidence="1">
    <location>
        <begin position="140"/>
        <end position="160"/>
    </location>
</feature>
<feature type="transmembrane region" description="Helical" evidence="1">
    <location>
        <begin position="166"/>
        <end position="186"/>
    </location>
</feature>
<feature type="transmembrane region" description="Helical" evidence="1">
    <location>
        <begin position="201"/>
        <end position="221"/>
    </location>
</feature>
<feature type="transmembrane region" description="Helical" evidence="1">
    <location>
        <begin position="242"/>
        <end position="262"/>
    </location>
</feature>
<feature type="transmembrane region" description="Helical" evidence="1">
    <location>
        <begin position="283"/>
        <end position="303"/>
    </location>
</feature>
<feature type="transmembrane region" description="Helical" evidence="1">
    <location>
        <begin position="340"/>
        <end position="360"/>
    </location>
</feature>
<feature type="transmembrane region" description="Helical" evidence="1">
    <location>
        <begin position="371"/>
        <end position="391"/>
    </location>
</feature>
<feature type="transmembrane region" description="Helical" evidence="1">
    <location>
        <begin position="396"/>
        <end position="416"/>
    </location>
</feature>
<feature type="transmembrane region" description="Helical" evidence="1">
    <location>
        <begin position="425"/>
        <end position="445"/>
    </location>
</feature>